<keyword id="KW-0044">Antibiotic</keyword>
<keyword id="KW-0929">Antimicrobial</keyword>
<keyword id="KW-0903">Direct protein sequencing</keyword>
<keyword id="KW-0238">DNA-binding</keyword>
<keyword id="KW-0539">Nucleus</keyword>
<keyword id="KW-0964">Secreted</keyword>
<sequence length="70" mass="7087">MPKRKSATKGDEPARRSARLSARPVPKPAAKPKKAAAPKKAVKGKKAAENGDAKAEAKVQAAGDGAGNAK</sequence>
<organism>
    <name type="scientific">Oncorhynchus mykiss</name>
    <name type="common">Rainbow trout</name>
    <name type="synonym">Salmo gairdneri</name>
    <dbReference type="NCBI Taxonomy" id="8022"/>
    <lineage>
        <taxon>Eukaryota</taxon>
        <taxon>Metazoa</taxon>
        <taxon>Chordata</taxon>
        <taxon>Craniata</taxon>
        <taxon>Vertebrata</taxon>
        <taxon>Euteleostomi</taxon>
        <taxon>Actinopterygii</taxon>
        <taxon>Neopterygii</taxon>
        <taxon>Teleostei</taxon>
        <taxon>Protacanthopterygii</taxon>
        <taxon>Salmoniformes</taxon>
        <taxon>Salmonidae</taxon>
        <taxon>Salmoninae</taxon>
        <taxon>Oncorhynchus</taxon>
    </lineage>
</organism>
<accession>P02315</accession>
<accession>P83338</accession>
<feature type="initiator methionine" description="Removed" evidence="3 4">
    <location>
        <position position="1"/>
    </location>
</feature>
<feature type="chain" id="PRO_0000013468" description="Non-histone chromosomal protein H6">
    <location>
        <begin position="2"/>
        <end position="70"/>
    </location>
</feature>
<feature type="chain" id="PRO_0000013469" description="Oncorhyncin-3">
    <location>
        <begin position="2"/>
        <end position="67"/>
    </location>
</feature>
<feature type="region of interest" description="Disordered" evidence="2">
    <location>
        <begin position="1"/>
        <end position="70"/>
    </location>
</feature>
<feature type="compositionally biased region" description="Basic residues" evidence="2">
    <location>
        <begin position="30"/>
        <end position="45"/>
    </location>
</feature>
<feature type="compositionally biased region" description="Basic and acidic residues" evidence="2">
    <location>
        <begin position="46"/>
        <end position="57"/>
    </location>
</feature>
<feature type="site" description="Cleavage" evidence="5">
    <location>
        <begin position="67"/>
        <end position="68"/>
    </location>
</feature>
<dbReference type="PIR" id="A02653">
    <property type="entry name" value="NSTR6"/>
</dbReference>
<dbReference type="Proteomes" id="UP000694395">
    <property type="component" value="Unplaced"/>
</dbReference>
<dbReference type="GO" id="GO:0000785">
    <property type="term" value="C:chromatin"/>
    <property type="evidence" value="ECO:0000314"/>
    <property type="project" value="CAFA"/>
</dbReference>
<dbReference type="GO" id="GO:0005576">
    <property type="term" value="C:extracellular region"/>
    <property type="evidence" value="ECO:0007669"/>
    <property type="project" value="UniProtKB-SubCell"/>
</dbReference>
<dbReference type="GO" id="GO:0005634">
    <property type="term" value="C:nucleus"/>
    <property type="evidence" value="ECO:0007669"/>
    <property type="project" value="UniProtKB-SubCell"/>
</dbReference>
<dbReference type="GO" id="GO:0003690">
    <property type="term" value="F:double-stranded DNA binding"/>
    <property type="evidence" value="ECO:0000314"/>
    <property type="project" value="CAFA"/>
</dbReference>
<dbReference type="GO" id="GO:0003676">
    <property type="term" value="F:nucleic acid binding"/>
    <property type="evidence" value="ECO:0000269"/>
    <property type="project" value="DisProt"/>
</dbReference>
<dbReference type="GO" id="GO:0031492">
    <property type="term" value="F:nucleosomal DNA binding"/>
    <property type="evidence" value="ECO:0007669"/>
    <property type="project" value="InterPro"/>
</dbReference>
<dbReference type="GO" id="GO:0050829">
    <property type="term" value="P:defense response to Gram-negative bacterium"/>
    <property type="evidence" value="ECO:0000314"/>
    <property type="project" value="AgBase"/>
</dbReference>
<dbReference type="GO" id="GO:0050830">
    <property type="term" value="P:defense response to Gram-positive bacterium"/>
    <property type="evidence" value="ECO:0000314"/>
    <property type="project" value="AgBase"/>
</dbReference>
<dbReference type="DisProt" id="DP00042"/>
<dbReference type="InterPro" id="IPR000079">
    <property type="entry name" value="HMGN_fam"/>
</dbReference>
<dbReference type="Pfam" id="PF01101">
    <property type="entry name" value="HMG14_17"/>
    <property type="match status" value="1"/>
</dbReference>
<dbReference type="PRINTS" id="PR00925">
    <property type="entry name" value="NONHISHMG17"/>
</dbReference>
<dbReference type="SMART" id="SM00527">
    <property type="entry name" value="HMG17"/>
    <property type="match status" value="1"/>
</dbReference>
<dbReference type="PROSITE" id="PS00355">
    <property type="entry name" value="HMG14_17"/>
    <property type="match status" value="1"/>
</dbReference>
<protein>
    <recommendedName>
        <fullName>Non-histone chromosomal protein H6</fullName>
        <shortName>Histone T</shortName>
    </recommendedName>
    <component>
        <recommendedName>
            <fullName>Oncorhyncin-3</fullName>
        </recommendedName>
        <alternativeName>
            <fullName>Oncorhyncin III</fullName>
        </alternativeName>
    </component>
</protein>
<comment type="function">
    <text evidence="3">Non-histone protein that probably binds to the inner side of nucleosomal DNA, altering the association between the DNA and the nucleosome octamer.</text>
</comment>
<comment type="function">
    <text evidence="3">Oncorhyncin III has antibacterial activity against Gram-positive and Gram-negative bacteria at submicromolar concentrations.</text>
</comment>
<comment type="subcellular location">
    <subcellularLocation>
        <location evidence="1">Nucleus</location>
    </subcellularLocation>
</comment>
<comment type="subcellular location">
    <molecule>Oncorhyncin-3</molecule>
    <subcellularLocation>
        <location evidence="5">Secreted</location>
    </subcellularLocation>
</comment>
<comment type="mass spectrometry" mass="6671.0" method="MALDI" evidence="3">
    <molecule>Oncorhyncin-3</molecule>
</comment>
<comment type="similarity">
    <text evidence="5">Belongs to the HMGN family.</text>
</comment>
<proteinExistence type="evidence at protein level"/>
<name>H6_ONCMY</name>
<evidence type="ECO:0000250" key="1"/>
<evidence type="ECO:0000256" key="2">
    <source>
        <dbReference type="SAM" id="MobiDB-lite"/>
    </source>
</evidence>
<evidence type="ECO:0000269" key="3">
    <source>
    </source>
</evidence>
<evidence type="ECO:0000269" key="4">
    <source>
    </source>
</evidence>
<evidence type="ECO:0000305" key="5"/>
<reference key="1">
    <citation type="journal article" date="1979" name="Eur. J. Biochem.">
        <title>The complete amino-acid sequence of a trout-testis non-histone protein, H6, localized in a subset of nucleosomes and its similarity to calf-thymus non-histone proteins HMG-14 and HMG-17.</title>
        <authorList>
            <person name="Watson D.C."/>
            <person name="Wong N.C.W."/>
            <person name="Dixon G.H."/>
        </authorList>
    </citation>
    <scope>PROTEIN SEQUENCE OF 2-70</scope>
    <source>
        <tissue>Testis</tissue>
    </source>
</reference>
<reference key="2">
    <citation type="journal article" date="2003" name="Biochem. J.">
        <title>Oncorhyncin III: a potent antimicrobial peptide derived from the non-histone chromosomal protein H6 of rainbow trout, Oncorhynchus mykiss.</title>
        <authorList>
            <person name="Fernandes J.M.O."/>
            <person name="Saint N."/>
            <person name="Kemp G.D."/>
            <person name="Smith V.J."/>
        </authorList>
    </citation>
    <scope>PROTEIN SEQUENCE OF 2-14</scope>
    <scope>FUNCTION OF ONCORHYNCIN III</scope>
    <scope>MASS SPECTROMETRY OF 2-67</scope>
    <source>
        <tissue>Skin mucus</tissue>
    </source>
</reference>